<reference key="1">
    <citation type="journal article" date="2003" name="Plant J.">
        <title>OsDREB genes in rice, Oryza sativa L., encode transcription activators that function in drought-, high-salt- and cold-responsive gene expression.</title>
        <authorList>
            <person name="Dubouzet J.G."/>
            <person name="Sakuma Y."/>
            <person name="Ito Y."/>
            <person name="Kasuga M."/>
            <person name="Dubouzet E.G."/>
            <person name="Miura S."/>
            <person name="Seki M."/>
            <person name="Shinozaki K."/>
            <person name="Yamaguchi-Shinozaki K."/>
        </authorList>
    </citation>
    <scope>NUCLEOTIDE SEQUENCE [MRNA]</scope>
    <scope>FUNCTION</scope>
    <scope>INDUCTION</scope>
    <scope>GENE FAMILY</scope>
</reference>
<reference key="2">
    <citation type="journal article" date="2005" name="Nature">
        <title>The map-based sequence of the rice genome.</title>
        <authorList>
            <consortium name="International rice genome sequencing project (IRGSP)"/>
        </authorList>
    </citation>
    <scope>NUCLEOTIDE SEQUENCE [LARGE SCALE GENOMIC DNA]</scope>
    <source>
        <strain>cv. Nipponbare</strain>
    </source>
</reference>
<reference key="3">
    <citation type="journal article" date="2008" name="Nucleic Acids Res.">
        <title>The rice annotation project database (RAP-DB): 2008 update.</title>
        <authorList>
            <consortium name="The rice annotation project (RAP)"/>
        </authorList>
    </citation>
    <scope>GENOME REANNOTATION</scope>
    <source>
        <strain>cv. Nipponbare</strain>
    </source>
</reference>
<reference key="4">
    <citation type="journal article" date="2013" name="Rice">
        <title>Improvement of the Oryza sativa Nipponbare reference genome using next generation sequence and optical map data.</title>
        <authorList>
            <person name="Kawahara Y."/>
            <person name="de la Bastide M."/>
            <person name="Hamilton J.P."/>
            <person name="Kanamori H."/>
            <person name="McCombie W.R."/>
            <person name="Ouyang S."/>
            <person name="Schwartz D.C."/>
            <person name="Tanaka T."/>
            <person name="Wu J."/>
            <person name="Zhou S."/>
            <person name="Childs K.L."/>
            <person name="Davidson R.M."/>
            <person name="Lin H."/>
            <person name="Quesada-Ocampo L."/>
            <person name="Vaillancourt B."/>
            <person name="Sakai H."/>
            <person name="Lee S.S."/>
            <person name="Kim J."/>
            <person name="Numa H."/>
            <person name="Itoh T."/>
            <person name="Buell C.R."/>
            <person name="Matsumoto T."/>
        </authorList>
    </citation>
    <scope>GENOME REANNOTATION</scope>
    <source>
        <strain>cv. Nipponbare</strain>
    </source>
</reference>
<reference key="5">
    <citation type="journal article" date="2005" name="PLoS Biol.">
        <title>The genomes of Oryza sativa: a history of duplications.</title>
        <authorList>
            <person name="Yu J."/>
            <person name="Wang J."/>
            <person name="Lin W."/>
            <person name="Li S."/>
            <person name="Li H."/>
            <person name="Zhou J."/>
            <person name="Ni P."/>
            <person name="Dong W."/>
            <person name="Hu S."/>
            <person name="Zeng C."/>
            <person name="Zhang J."/>
            <person name="Zhang Y."/>
            <person name="Li R."/>
            <person name="Xu Z."/>
            <person name="Li S."/>
            <person name="Li X."/>
            <person name="Zheng H."/>
            <person name="Cong L."/>
            <person name="Lin L."/>
            <person name="Yin J."/>
            <person name="Geng J."/>
            <person name="Li G."/>
            <person name="Shi J."/>
            <person name="Liu J."/>
            <person name="Lv H."/>
            <person name="Li J."/>
            <person name="Wang J."/>
            <person name="Deng Y."/>
            <person name="Ran L."/>
            <person name="Shi X."/>
            <person name="Wang X."/>
            <person name="Wu Q."/>
            <person name="Li C."/>
            <person name="Ren X."/>
            <person name="Wang J."/>
            <person name="Wang X."/>
            <person name="Li D."/>
            <person name="Liu D."/>
            <person name="Zhang X."/>
            <person name="Ji Z."/>
            <person name="Zhao W."/>
            <person name="Sun Y."/>
            <person name="Zhang Z."/>
            <person name="Bao J."/>
            <person name="Han Y."/>
            <person name="Dong L."/>
            <person name="Ji J."/>
            <person name="Chen P."/>
            <person name="Wu S."/>
            <person name="Liu J."/>
            <person name="Xiao Y."/>
            <person name="Bu D."/>
            <person name="Tan J."/>
            <person name="Yang L."/>
            <person name="Ye C."/>
            <person name="Zhang J."/>
            <person name="Xu J."/>
            <person name="Zhou Y."/>
            <person name="Yu Y."/>
            <person name="Zhang B."/>
            <person name="Zhuang S."/>
            <person name="Wei H."/>
            <person name="Liu B."/>
            <person name="Lei M."/>
            <person name="Yu H."/>
            <person name="Li Y."/>
            <person name="Xu H."/>
            <person name="Wei S."/>
            <person name="He X."/>
            <person name="Fang L."/>
            <person name="Zhang Z."/>
            <person name="Zhang Y."/>
            <person name="Huang X."/>
            <person name="Su Z."/>
            <person name="Tong W."/>
            <person name="Li J."/>
            <person name="Tong Z."/>
            <person name="Li S."/>
            <person name="Ye J."/>
            <person name="Wang L."/>
            <person name="Fang L."/>
            <person name="Lei T."/>
            <person name="Chen C.-S."/>
            <person name="Chen H.-C."/>
            <person name="Xu Z."/>
            <person name="Li H."/>
            <person name="Huang H."/>
            <person name="Zhang F."/>
            <person name="Xu H."/>
            <person name="Li N."/>
            <person name="Zhao C."/>
            <person name="Li S."/>
            <person name="Dong L."/>
            <person name="Huang Y."/>
            <person name="Li L."/>
            <person name="Xi Y."/>
            <person name="Qi Q."/>
            <person name="Li W."/>
            <person name="Zhang B."/>
            <person name="Hu W."/>
            <person name="Zhang Y."/>
            <person name="Tian X."/>
            <person name="Jiao Y."/>
            <person name="Liang X."/>
            <person name="Jin J."/>
            <person name="Gao L."/>
            <person name="Zheng W."/>
            <person name="Hao B."/>
            <person name="Liu S.-M."/>
            <person name="Wang W."/>
            <person name="Yuan L."/>
            <person name="Cao M."/>
            <person name="McDermott J."/>
            <person name="Samudrala R."/>
            <person name="Wang J."/>
            <person name="Wong G.K.-S."/>
            <person name="Yang H."/>
        </authorList>
    </citation>
    <scope>NUCLEOTIDE SEQUENCE [LARGE SCALE GENOMIC DNA]</scope>
    <source>
        <strain>cv. Nipponbare</strain>
    </source>
</reference>
<reference key="6">
    <citation type="journal article" date="2003" name="Science">
        <title>Collection, mapping, and annotation of over 28,000 cDNA clones from japonica rice.</title>
        <authorList>
            <consortium name="The rice full-length cDNA consortium"/>
        </authorList>
    </citation>
    <scope>NUCLEOTIDE SEQUENCE [LARGE SCALE MRNA]</scope>
    <source>
        <strain>cv. Nipponbare</strain>
    </source>
</reference>
<reference key="7">
    <citation type="journal article" date="2005" name="Plant Mol. Biol.">
        <title>Structural, functional, and phylogenetic characterization of a large CBF gene family in barley.</title>
        <authorList>
            <person name="Skinner J.S."/>
            <person name="von Zitzewitz J."/>
            <person name="Szuecs P."/>
            <person name="Marquez-Cedillo L."/>
            <person name="Filichkin T."/>
            <person name="Amundsen K."/>
            <person name="Stockinger E.J."/>
            <person name="Thomashow M.F."/>
            <person name="Chen T.H.H."/>
            <person name="Hayes P.M."/>
        </authorList>
    </citation>
    <scope>GENE FAMILY</scope>
    <source>
        <strain>cv. Nipponbare</strain>
    </source>
</reference>
<reference key="8">
    <citation type="journal article" date="2006" name="Plant Physiol.">
        <title>Genome-wide analysis of the ERF gene family in Arabidopsis and rice.</title>
        <authorList>
            <person name="Nakano T."/>
            <person name="Suzuki K."/>
            <person name="Fujimura T."/>
            <person name="Shinshi H."/>
        </authorList>
    </citation>
    <scope>GENE FAMILY</scope>
    <scope>NOMENCLATURE</scope>
</reference>
<reference key="9">
    <citation type="journal article" date="2010" name="Mol. Genet. Genomics">
        <title>Comprehensive analysis of rice DREB2-type genes that encode transcription factors involved in the expression of abiotic stress-responsive genes.</title>
        <authorList>
            <person name="Matsukura S."/>
            <person name="Mizoi J."/>
            <person name="Yoshida T."/>
            <person name="Todaka D."/>
            <person name="Ito Y."/>
            <person name="Maruyama K."/>
            <person name="Shinozaki K."/>
            <person name="Yamaguchi-Shinozaki K."/>
        </authorList>
    </citation>
    <scope>SUBCELLULAR LOCATION</scope>
</reference>
<feature type="chain" id="PRO_0000323028" description="Dehydration-responsive element-binding protein 2A">
    <location>
        <begin position="1"/>
        <end position="274"/>
    </location>
</feature>
<feature type="DNA-binding region" description="AP2/ERF" evidence="1">
    <location>
        <begin position="75"/>
        <end position="132"/>
    </location>
</feature>
<feature type="region of interest" description="Disordered" evidence="2">
    <location>
        <begin position="1"/>
        <end position="75"/>
    </location>
</feature>
<feature type="compositionally biased region" description="Basic and acidic residues" evidence="2">
    <location>
        <begin position="1"/>
        <end position="10"/>
    </location>
</feature>
<feature type="compositionally biased region" description="Basic and acidic residues" evidence="2">
    <location>
        <begin position="35"/>
        <end position="50"/>
    </location>
</feature>
<feature type="sequence conflict" description="In Ref. 6; AK121956." evidence="5" ref="6">
    <original>Q</original>
    <variation>A</variation>
    <location>
        <position position="81"/>
    </location>
</feature>
<protein>
    <recommendedName>
        <fullName>Dehydration-responsive element-binding protein 2A</fullName>
        <shortName>OsDREB2A</shortName>
    </recommendedName>
</protein>
<dbReference type="EMBL" id="AF300971">
    <property type="protein sequence ID" value="AAN02487.2"/>
    <property type="molecule type" value="mRNA"/>
</dbReference>
<dbReference type="EMBL" id="AP008207">
    <property type="protein sequence ID" value="BAF04021.1"/>
    <property type="molecule type" value="Genomic_DNA"/>
</dbReference>
<dbReference type="EMBL" id="AP014957">
    <property type="protein sequence ID" value="BAS70561.1"/>
    <property type="molecule type" value="Genomic_DNA"/>
</dbReference>
<dbReference type="EMBL" id="CM000138">
    <property type="protein sequence ID" value="EAZ10669.1"/>
    <property type="status" value="ALT_SEQ"/>
    <property type="molecule type" value="Genomic_DNA"/>
</dbReference>
<dbReference type="EMBL" id="AK121956">
    <property type="status" value="NOT_ANNOTATED_CDS"/>
    <property type="molecule type" value="mRNA"/>
</dbReference>
<dbReference type="RefSeq" id="XP_015621339.1">
    <property type="nucleotide sequence ID" value="XM_015765853.1"/>
</dbReference>
<dbReference type="SMR" id="Q0JQF7"/>
<dbReference type="FunCoup" id="Q0JQF7">
    <property type="interactions" value="45"/>
</dbReference>
<dbReference type="STRING" id="39947.Q0JQF7"/>
<dbReference type="PaxDb" id="39947-Q0JQF7"/>
<dbReference type="EnsemblPlants" id="Os01t0165000-01">
    <property type="protein sequence ID" value="Os01t0165000-01"/>
    <property type="gene ID" value="Os01g0165000"/>
</dbReference>
<dbReference type="EnsemblPlants" id="Os01t0165000-02">
    <property type="protein sequence ID" value="Os01t0165000-02"/>
    <property type="gene ID" value="Os01g0165000"/>
</dbReference>
<dbReference type="Gramene" id="Os01t0165000-01">
    <property type="protein sequence ID" value="Os01t0165000-01"/>
    <property type="gene ID" value="Os01g0165000"/>
</dbReference>
<dbReference type="Gramene" id="Os01t0165000-02">
    <property type="protein sequence ID" value="Os01t0165000-02"/>
    <property type="gene ID" value="Os01g0165000"/>
</dbReference>
<dbReference type="KEGG" id="dosa:Os01g0165000"/>
<dbReference type="eggNOG" id="ENOG502QTBU">
    <property type="taxonomic scope" value="Eukaryota"/>
</dbReference>
<dbReference type="HOGENOM" id="CLU_046486_2_0_1"/>
<dbReference type="InParanoid" id="Q0JQF7"/>
<dbReference type="OMA" id="KMEVHEE"/>
<dbReference type="OrthoDB" id="550883at2759"/>
<dbReference type="Proteomes" id="UP000000763">
    <property type="component" value="Chromosome 1"/>
</dbReference>
<dbReference type="Proteomes" id="UP000007752">
    <property type="component" value="Chromosome 1"/>
</dbReference>
<dbReference type="Proteomes" id="UP000059680">
    <property type="component" value="Chromosome 1"/>
</dbReference>
<dbReference type="GO" id="GO:0005634">
    <property type="term" value="C:nucleus"/>
    <property type="evidence" value="ECO:0000314"/>
    <property type="project" value="UniProtKB"/>
</dbReference>
<dbReference type="GO" id="GO:0003700">
    <property type="term" value="F:DNA-binding transcription factor activity"/>
    <property type="evidence" value="ECO:0000318"/>
    <property type="project" value="GO_Central"/>
</dbReference>
<dbReference type="GO" id="GO:0000976">
    <property type="term" value="F:transcription cis-regulatory region binding"/>
    <property type="evidence" value="ECO:0000318"/>
    <property type="project" value="GO_Central"/>
</dbReference>
<dbReference type="GO" id="GO:0045893">
    <property type="term" value="P:positive regulation of DNA-templated transcription"/>
    <property type="evidence" value="ECO:0000314"/>
    <property type="project" value="UniProtKB"/>
</dbReference>
<dbReference type="GO" id="GO:0006950">
    <property type="term" value="P:response to stress"/>
    <property type="evidence" value="ECO:0000318"/>
    <property type="project" value="GO_Central"/>
</dbReference>
<dbReference type="CDD" id="cd00018">
    <property type="entry name" value="AP2"/>
    <property type="match status" value="1"/>
</dbReference>
<dbReference type="FunFam" id="3.30.730.10:FF:000001">
    <property type="entry name" value="Ethylene-responsive transcription factor 2"/>
    <property type="match status" value="1"/>
</dbReference>
<dbReference type="Gene3D" id="3.30.730.10">
    <property type="entry name" value="AP2/ERF domain"/>
    <property type="match status" value="1"/>
</dbReference>
<dbReference type="InterPro" id="IPR001471">
    <property type="entry name" value="AP2/ERF_dom"/>
</dbReference>
<dbReference type="InterPro" id="IPR036955">
    <property type="entry name" value="AP2/ERF_dom_sf"/>
</dbReference>
<dbReference type="InterPro" id="IPR016177">
    <property type="entry name" value="DNA-bd_dom_sf"/>
</dbReference>
<dbReference type="PANTHER" id="PTHR31241">
    <property type="entry name" value="DEHYDRATION-RESPONSIVE ELEMENT-BINDING PROTEIN 2C"/>
    <property type="match status" value="1"/>
</dbReference>
<dbReference type="PANTHER" id="PTHR31241:SF62">
    <property type="entry name" value="DEHYDRATION-RESPONSIVE ELEMENT-BINDING PROTEIN 2D"/>
    <property type="match status" value="1"/>
</dbReference>
<dbReference type="Pfam" id="PF00847">
    <property type="entry name" value="AP2"/>
    <property type="match status" value="1"/>
</dbReference>
<dbReference type="PRINTS" id="PR00367">
    <property type="entry name" value="ETHRSPELEMNT"/>
</dbReference>
<dbReference type="SMART" id="SM00380">
    <property type="entry name" value="AP2"/>
    <property type="match status" value="1"/>
</dbReference>
<dbReference type="SUPFAM" id="SSF54171">
    <property type="entry name" value="DNA-binding domain"/>
    <property type="match status" value="1"/>
</dbReference>
<dbReference type="PROSITE" id="PS51032">
    <property type="entry name" value="AP2_ERF"/>
    <property type="match status" value="1"/>
</dbReference>
<proteinExistence type="evidence at transcript level"/>
<evidence type="ECO:0000255" key="1">
    <source>
        <dbReference type="PROSITE-ProRule" id="PRU00366"/>
    </source>
</evidence>
<evidence type="ECO:0000256" key="2">
    <source>
        <dbReference type="SAM" id="MobiDB-lite"/>
    </source>
</evidence>
<evidence type="ECO:0000269" key="3">
    <source>
    </source>
</evidence>
<evidence type="ECO:0000269" key="4">
    <source>
    </source>
</evidence>
<evidence type="ECO:0000305" key="5"/>
<gene>
    <name type="primary">DREB2A</name>
    <name type="synonym">ERF40</name>
    <name type="ordered locus">Os01g0165000</name>
    <name type="ordered locus">LOC_Os01g07120</name>
    <name type="ORF">OsJ_000494</name>
</gene>
<comment type="function">
    <text evidence="3">Transcriptional activator that binds specifically to the DNA sequence 5'-[AG]CCGAC-3' of the cis-acting dehydration-responsive element (DRE). Binding to the C-repeat/DRE element mediates high salinity- and dehydration-inducible transcription.</text>
</comment>
<comment type="subcellular location">
    <subcellularLocation>
        <location evidence="1 4">Nucleus</location>
    </subcellularLocation>
</comment>
<comment type="induction">
    <text evidence="3">By high-salt and drought stresses.</text>
</comment>
<comment type="similarity">
    <text evidence="5">Belongs to the AP2/ERF transcription factor family. ERF subfamily.</text>
</comment>
<comment type="sequence caution" evidence="5">
    <conflict type="erroneous gene model prediction">
        <sequence resource="EMBL-CDS" id="EAZ10669"/>
    </conflict>
</comment>
<name>DRE2A_ORYSJ</name>
<accession>Q0JQF7</accession>
<accession>A0A0N7KCE1</accession>
<accession>A2ZPM2</accession>
<accession>Q8LLU9</accession>
<keyword id="KW-0010">Activator</keyword>
<keyword id="KW-0238">DNA-binding</keyword>
<keyword id="KW-0539">Nucleus</keyword>
<keyword id="KW-1185">Reference proteome</keyword>
<keyword id="KW-0346">Stress response</keyword>
<keyword id="KW-0804">Transcription</keyword>
<keyword id="KW-0805">Transcription regulation</keyword>
<organism>
    <name type="scientific">Oryza sativa subsp. japonica</name>
    <name type="common">Rice</name>
    <dbReference type="NCBI Taxonomy" id="39947"/>
    <lineage>
        <taxon>Eukaryota</taxon>
        <taxon>Viridiplantae</taxon>
        <taxon>Streptophyta</taxon>
        <taxon>Embryophyta</taxon>
        <taxon>Tracheophyta</taxon>
        <taxon>Spermatophyta</taxon>
        <taxon>Magnoliopsida</taxon>
        <taxon>Liliopsida</taxon>
        <taxon>Poales</taxon>
        <taxon>Poaceae</taxon>
        <taxon>BOP clade</taxon>
        <taxon>Oryzoideae</taxon>
        <taxon>Oryzeae</taxon>
        <taxon>Oryzinae</taxon>
        <taxon>Oryza</taxon>
        <taxon>Oryza sativa</taxon>
    </lineage>
</organism>
<sequence length="274" mass="30665">MERGEGRRGDCSVQVRKKRTRRKSDGPDSIAETIKWWKEQNQKLQEENSSRKAPAKGSKKGCMAGKGGPENSNCAYRGVRQRTWGKWVAEIREPNRGRRLWLGSFPTALEAAHAYDEAARAMYGPTARVNFADNSTDANSGCTSAPSLMMSNGPATIPSDEKDELESPPFIVANGPAVLYQPDKKDVLERVVPEVQDVKTEGSNGLKRVCQERKNMEVCESEGIVLHKEVNISYDYFNVHEVVEMIIVELSADQKTEVHEEYQEGDDGFSLFSY</sequence>